<reference key="1">
    <citation type="journal article" date="2004" name="Nat. Biotechnol.">
        <title>The genome sequence of the extreme thermophile Thermus thermophilus.</title>
        <authorList>
            <person name="Henne A."/>
            <person name="Brueggemann H."/>
            <person name="Raasch C."/>
            <person name="Wiezer A."/>
            <person name="Hartsch T."/>
            <person name="Liesegang H."/>
            <person name="Johann A."/>
            <person name="Lienard T."/>
            <person name="Gohl O."/>
            <person name="Martinez-Arias R."/>
            <person name="Jacobi C."/>
            <person name="Starkuviene V."/>
            <person name="Schlenczeck S."/>
            <person name="Dencker S."/>
            <person name="Huber R."/>
            <person name="Klenk H.-P."/>
            <person name="Kramer W."/>
            <person name="Merkl R."/>
            <person name="Gottschalk G."/>
            <person name="Fritz H.-J."/>
        </authorList>
    </citation>
    <scope>NUCLEOTIDE SEQUENCE [LARGE SCALE GENOMIC DNA]</scope>
    <source>
        <strain>ATCC BAA-163 / DSM 7039 / HB27</strain>
    </source>
</reference>
<organism>
    <name type="scientific">Thermus thermophilus (strain ATCC BAA-163 / DSM 7039 / HB27)</name>
    <dbReference type="NCBI Taxonomy" id="262724"/>
    <lineage>
        <taxon>Bacteria</taxon>
        <taxon>Thermotogati</taxon>
        <taxon>Deinococcota</taxon>
        <taxon>Deinococci</taxon>
        <taxon>Thermales</taxon>
        <taxon>Thermaceae</taxon>
        <taxon>Thermus</taxon>
    </lineage>
</organism>
<comment type="function">
    <text evidence="1">Catalyzes the transfer of the phosphoribosyl group of 5-phosphorylribose-1-pyrophosphate (PRPP) to anthranilate to yield N-(5'-phosphoribosyl)-anthranilate (PRA).</text>
</comment>
<comment type="catalytic activity">
    <reaction evidence="1">
        <text>N-(5-phospho-beta-D-ribosyl)anthranilate + diphosphate = 5-phospho-alpha-D-ribose 1-diphosphate + anthranilate</text>
        <dbReference type="Rhea" id="RHEA:11768"/>
        <dbReference type="ChEBI" id="CHEBI:16567"/>
        <dbReference type="ChEBI" id="CHEBI:18277"/>
        <dbReference type="ChEBI" id="CHEBI:33019"/>
        <dbReference type="ChEBI" id="CHEBI:58017"/>
        <dbReference type="EC" id="2.4.2.18"/>
    </reaction>
</comment>
<comment type="cofactor">
    <cofactor evidence="1">
        <name>Mg(2+)</name>
        <dbReference type="ChEBI" id="CHEBI:18420"/>
    </cofactor>
    <text evidence="1">Binds 2 magnesium ions per monomer.</text>
</comment>
<comment type="pathway">
    <text evidence="1">Amino-acid biosynthesis; L-tryptophan biosynthesis; L-tryptophan from chorismate: step 2/5.</text>
</comment>
<comment type="subunit">
    <text evidence="1">Homodimer.</text>
</comment>
<comment type="similarity">
    <text evidence="1">Belongs to the anthranilate phosphoribosyltransferase family.</text>
</comment>
<sequence length="329" mass="34275">MDAVKKAILGEVLEEEEAYEVMRALMAGEVSPVRAAGLLVALSLRGERPHEIAAMARAMREAARPLRVHRRPLLDIVGTGGDGKGLMNLSTLAALVAAAGGVAVAKHGNRAASSRAGSADLLEALGVDLEAPPERVGEAIEELGFGFLFARVFHPAMRHVAPVRAELGVRTVFNLLGPLTNPAGADAYVLGVFSPEWLAPMAEALERLGARGLVVHGEGADELVLGENRVVEVGKGAYALTPEEVGLKRAPLEALKGGGPEENAALARRLLKGEEKGPLADAVALAAGAGFYAAGKTPSLKEGVALAREVLASGEAYLLLERYVAFLRA</sequence>
<dbReference type="EC" id="2.4.2.18" evidence="1"/>
<dbReference type="EMBL" id="AE017221">
    <property type="protein sequence ID" value="AAS81833.1"/>
    <property type="molecule type" value="Genomic_DNA"/>
</dbReference>
<dbReference type="RefSeq" id="WP_011173866.1">
    <property type="nucleotide sequence ID" value="NC_005835.1"/>
</dbReference>
<dbReference type="SMR" id="Q72HJ6"/>
<dbReference type="GeneID" id="3169363"/>
<dbReference type="KEGG" id="tth:TT_C1491"/>
<dbReference type="eggNOG" id="COG0547">
    <property type="taxonomic scope" value="Bacteria"/>
</dbReference>
<dbReference type="HOGENOM" id="CLU_034315_2_1_0"/>
<dbReference type="OrthoDB" id="9806430at2"/>
<dbReference type="UniPathway" id="UPA00035">
    <property type="reaction ID" value="UER00041"/>
</dbReference>
<dbReference type="Proteomes" id="UP000000592">
    <property type="component" value="Chromosome"/>
</dbReference>
<dbReference type="GO" id="GO:0005829">
    <property type="term" value="C:cytosol"/>
    <property type="evidence" value="ECO:0007669"/>
    <property type="project" value="TreeGrafter"/>
</dbReference>
<dbReference type="GO" id="GO:0004048">
    <property type="term" value="F:anthranilate phosphoribosyltransferase activity"/>
    <property type="evidence" value="ECO:0007669"/>
    <property type="project" value="UniProtKB-UniRule"/>
</dbReference>
<dbReference type="GO" id="GO:0000287">
    <property type="term" value="F:magnesium ion binding"/>
    <property type="evidence" value="ECO:0007669"/>
    <property type="project" value="UniProtKB-UniRule"/>
</dbReference>
<dbReference type="GO" id="GO:0000162">
    <property type="term" value="P:L-tryptophan biosynthetic process"/>
    <property type="evidence" value="ECO:0007669"/>
    <property type="project" value="UniProtKB-UniRule"/>
</dbReference>
<dbReference type="FunFam" id="3.40.1030.10:FF:000002">
    <property type="entry name" value="Anthranilate phosphoribosyltransferase"/>
    <property type="match status" value="1"/>
</dbReference>
<dbReference type="Gene3D" id="3.40.1030.10">
    <property type="entry name" value="Nucleoside phosphorylase/phosphoribosyltransferase catalytic domain"/>
    <property type="match status" value="1"/>
</dbReference>
<dbReference type="Gene3D" id="1.20.970.10">
    <property type="entry name" value="Transferase, Pyrimidine Nucleoside Phosphorylase, Chain C"/>
    <property type="match status" value="1"/>
</dbReference>
<dbReference type="HAMAP" id="MF_00211">
    <property type="entry name" value="TrpD"/>
    <property type="match status" value="1"/>
</dbReference>
<dbReference type="InterPro" id="IPR005940">
    <property type="entry name" value="Anthranilate_Pribosyl_Tfrase"/>
</dbReference>
<dbReference type="InterPro" id="IPR000312">
    <property type="entry name" value="Glycosyl_Trfase_fam3"/>
</dbReference>
<dbReference type="InterPro" id="IPR017459">
    <property type="entry name" value="Glycosyl_Trfase_fam3_N_dom"/>
</dbReference>
<dbReference type="InterPro" id="IPR036320">
    <property type="entry name" value="Glycosyl_Trfase_fam3_N_dom_sf"/>
</dbReference>
<dbReference type="InterPro" id="IPR035902">
    <property type="entry name" value="Nuc_phospho_transferase"/>
</dbReference>
<dbReference type="NCBIfam" id="TIGR01245">
    <property type="entry name" value="trpD"/>
    <property type="match status" value="1"/>
</dbReference>
<dbReference type="PANTHER" id="PTHR43285">
    <property type="entry name" value="ANTHRANILATE PHOSPHORIBOSYLTRANSFERASE"/>
    <property type="match status" value="1"/>
</dbReference>
<dbReference type="PANTHER" id="PTHR43285:SF2">
    <property type="entry name" value="ANTHRANILATE PHOSPHORIBOSYLTRANSFERASE"/>
    <property type="match status" value="1"/>
</dbReference>
<dbReference type="Pfam" id="PF02885">
    <property type="entry name" value="Glycos_trans_3N"/>
    <property type="match status" value="1"/>
</dbReference>
<dbReference type="Pfam" id="PF00591">
    <property type="entry name" value="Glycos_transf_3"/>
    <property type="match status" value="1"/>
</dbReference>
<dbReference type="SUPFAM" id="SSF52418">
    <property type="entry name" value="Nucleoside phosphorylase/phosphoribosyltransferase catalytic domain"/>
    <property type="match status" value="1"/>
</dbReference>
<dbReference type="SUPFAM" id="SSF47648">
    <property type="entry name" value="Nucleoside phosphorylase/phosphoribosyltransferase N-terminal domain"/>
    <property type="match status" value="1"/>
</dbReference>
<name>TRPD_THET2</name>
<gene>
    <name evidence="1" type="primary">trpD</name>
    <name type="ordered locus">TT_C1491</name>
</gene>
<evidence type="ECO:0000255" key="1">
    <source>
        <dbReference type="HAMAP-Rule" id="MF_00211"/>
    </source>
</evidence>
<protein>
    <recommendedName>
        <fullName evidence="1">Anthranilate phosphoribosyltransferase</fullName>
        <ecNumber evidence="1">2.4.2.18</ecNumber>
    </recommendedName>
</protein>
<keyword id="KW-0028">Amino-acid biosynthesis</keyword>
<keyword id="KW-0057">Aromatic amino acid biosynthesis</keyword>
<keyword id="KW-0328">Glycosyltransferase</keyword>
<keyword id="KW-0460">Magnesium</keyword>
<keyword id="KW-0479">Metal-binding</keyword>
<keyword id="KW-0808">Transferase</keyword>
<keyword id="KW-0822">Tryptophan biosynthesis</keyword>
<accession>Q72HJ6</accession>
<feature type="chain" id="PRO_1000043077" description="Anthranilate phosphoribosyltransferase">
    <location>
        <begin position="1"/>
        <end position="329"/>
    </location>
</feature>
<feature type="binding site" evidence="1">
    <location>
        <position position="78"/>
    </location>
    <ligand>
        <name>5-phospho-alpha-D-ribose 1-diphosphate</name>
        <dbReference type="ChEBI" id="CHEBI:58017"/>
    </ligand>
</feature>
<feature type="binding site" evidence="1">
    <location>
        <position position="78"/>
    </location>
    <ligand>
        <name>anthranilate</name>
        <dbReference type="ChEBI" id="CHEBI:16567"/>
        <label>1</label>
    </ligand>
</feature>
<feature type="binding site" evidence="1">
    <location>
        <begin position="81"/>
        <end position="82"/>
    </location>
    <ligand>
        <name>5-phospho-alpha-D-ribose 1-diphosphate</name>
        <dbReference type="ChEBI" id="CHEBI:58017"/>
    </ligand>
</feature>
<feature type="binding site" evidence="1">
    <location>
        <begin position="88"/>
        <end position="91"/>
    </location>
    <ligand>
        <name>5-phospho-alpha-D-ribose 1-diphosphate</name>
        <dbReference type="ChEBI" id="CHEBI:58017"/>
    </ligand>
</feature>
<feature type="binding site" evidence="1">
    <location>
        <position position="90"/>
    </location>
    <ligand>
        <name>Mg(2+)</name>
        <dbReference type="ChEBI" id="CHEBI:18420"/>
        <label>1</label>
    </ligand>
</feature>
<feature type="binding site" evidence="1">
    <location>
        <begin position="106"/>
        <end position="114"/>
    </location>
    <ligand>
        <name>5-phospho-alpha-D-ribose 1-diphosphate</name>
        <dbReference type="ChEBI" id="CHEBI:58017"/>
    </ligand>
</feature>
<feature type="binding site" evidence="1">
    <location>
        <position position="109"/>
    </location>
    <ligand>
        <name>anthranilate</name>
        <dbReference type="ChEBI" id="CHEBI:16567"/>
        <label>1</label>
    </ligand>
</feature>
<feature type="binding site" evidence="1">
    <location>
        <position position="118"/>
    </location>
    <ligand>
        <name>5-phospho-alpha-D-ribose 1-diphosphate</name>
        <dbReference type="ChEBI" id="CHEBI:58017"/>
    </ligand>
</feature>
<feature type="binding site" evidence="1">
    <location>
        <position position="164"/>
    </location>
    <ligand>
        <name>anthranilate</name>
        <dbReference type="ChEBI" id="CHEBI:16567"/>
        <label>2</label>
    </ligand>
</feature>
<feature type="binding site" evidence="1">
    <location>
        <position position="221"/>
    </location>
    <ligand>
        <name>Mg(2+)</name>
        <dbReference type="ChEBI" id="CHEBI:18420"/>
        <label>2</label>
    </ligand>
</feature>
<feature type="binding site" evidence="1">
    <location>
        <position position="222"/>
    </location>
    <ligand>
        <name>Mg(2+)</name>
        <dbReference type="ChEBI" id="CHEBI:18420"/>
        <label>1</label>
    </ligand>
</feature>
<feature type="binding site" evidence="1">
    <location>
        <position position="222"/>
    </location>
    <ligand>
        <name>Mg(2+)</name>
        <dbReference type="ChEBI" id="CHEBI:18420"/>
        <label>2</label>
    </ligand>
</feature>
<proteinExistence type="inferred from homology"/>